<comment type="function">
    <text evidence="1">Catalyzes the attachment of tyrosine to tRNA(Tyr) in a two-step reaction: tyrosine is first activated by ATP to form Tyr-AMP and then transferred to the acceptor end of tRNA(Tyr).</text>
</comment>
<comment type="catalytic activity">
    <reaction evidence="1">
        <text>tRNA(Tyr) + L-tyrosine + ATP = L-tyrosyl-tRNA(Tyr) + AMP + diphosphate + H(+)</text>
        <dbReference type="Rhea" id="RHEA:10220"/>
        <dbReference type="Rhea" id="RHEA-COMP:9706"/>
        <dbReference type="Rhea" id="RHEA-COMP:9707"/>
        <dbReference type="ChEBI" id="CHEBI:15378"/>
        <dbReference type="ChEBI" id="CHEBI:30616"/>
        <dbReference type="ChEBI" id="CHEBI:33019"/>
        <dbReference type="ChEBI" id="CHEBI:58315"/>
        <dbReference type="ChEBI" id="CHEBI:78442"/>
        <dbReference type="ChEBI" id="CHEBI:78536"/>
        <dbReference type="ChEBI" id="CHEBI:456215"/>
        <dbReference type="EC" id="6.1.1.1"/>
    </reaction>
</comment>
<comment type="subunit">
    <text evidence="1">Homodimer.</text>
</comment>
<comment type="subcellular location">
    <subcellularLocation>
        <location evidence="1">Cytoplasm</location>
    </subcellularLocation>
</comment>
<comment type="similarity">
    <text evidence="1">Belongs to the class-I aminoacyl-tRNA synthetase family. TyrS type 2 subfamily.</text>
</comment>
<accession>Q3B5D0</accession>
<gene>
    <name evidence="1" type="primary">tyrS</name>
    <name type="ordered locus">Plut_0568</name>
</gene>
<dbReference type="EC" id="6.1.1.1" evidence="1"/>
<dbReference type="EMBL" id="CP000096">
    <property type="protein sequence ID" value="ABB23451.1"/>
    <property type="molecule type" value="Genomic_DNA"/>
</dbReference>
<dbReference type="RefSeq" id="WP_011357326.1">
    <property type="nucleotide sequence ID" value="NC_007512.1"/>
</dbReference>
<dbReference type="SMR" id="Q3B5D0"/>
<dbReference type="STRING" id="319225.Plut_0568"/>
<dbReference type="KEGG" id="plt:Plut_0568"/>
<dbReference type="eggNOG" id="COG0162">
    <property type="taxonomic scope" value="Bacteria"/>
</dbReference>
<dbReference type="HOGENOM" id="CLU_024003_5_0_10"/>
<dbReference type="OrthoDB" id="9804243at2"/>
<dbReference type="Proteomes" id="UP000002709">
    <property type="component" value="Chromosome"/>
</dbReference>
<dbReference type="GO" id="GO:0005829">
    <property type="term" value="C:cytosol"/>
    <property type="evidence" value="ECO:0007669"/>
    <property type="project" value="TreeGrafter"/>
</dbReference>
<dbReference type="GO" id="GO:0005524">
    <property type="term" value="F:ATP binding"/>
    <property type="evidence" value="ECO:0007669"/>
    <property type="project" value="UniProtKB-UniRule"/>
</dbReference>
<dbReference type="GO" id="GO:0003723">
    <property type="term" value="F:RNA binding"/>
    <property type="evidence" value="ECO:0007669"/>
    <property type="project" value="UniProtKB-KW"/>
</dbReference>
<dbReference type="GO" id="GO:0004831">
    <property type="term" value="F:tyrosine-tRNA ligase activity"/>
    <property type="evidence" value="ECO:0007669"/>
    <property type="project" value="UniProtKB-UniRule"/>
</dbReference>
<dbReference type="GO" id="GO:0006437">
    <property type="term" value="P:tyrosyl-tRNA aminoacylation"/>
    <property type="evidence" value="ECO:0007669"/>
    <property type="project" value="UniProtKB-UniRule"/>
</dbReference>
<dbReference type="CDD" id="cd00165">
    <property type="entry name" value="S4"/>
    <property type="match status" value="1"/>
</dbReference>
<dbReference type="CDD" id="cd00805">
    <property type="entry name" value="TyrRS_core"/>
    <property type="match status" value="1"/>
</dbReference>
<dbReference type="FunFam" id="3.40.50.620:FF:000061">
    <property type="entry name" value="Tyrosine--tRNA ligase"/>
    <property type="match status" value="1"/>
</dbReference>
<dbReference type="Gene3D" id="3.40.50.620">
    <property type="entry name" value="HUPs"/>
    <property type="match status" value="1"/>
</dbReference>
<dbReference type="Gene3D" id="3.10.290.10">
    <property type="entry name" value="RNA-binding S4 domain"/>
    <property type="match status" value="1"/>
</dbReference>
<dbReference type="Gene3D" id="1.10.240.10">
    <property type="entry name" value="Tyrosyl-Transfer RNA Synthetase"/>
    <property type="match status" value="1"/>
</dbReference>
<dbReference type="HAMAP" id="MF_02007">
    <property type="entry name" value="Tyr_tRNA_synth_type2"/>
    <property type="match status" value="1"/>
</dbReference>
<dbReference type="InterPro" id="IPR002305">
    <property type="entry name" value="aa-tRNA-synth_Ic"/>
</dbReference>
<dbReference type="InterPro" id="IPR014729">
    <property type="entry name" value="Rossmann-like_a/b/a_fold"/>
</dbReference>
<dbReference type="InterPro" id="IPR036986">
    <property type="entry name" value="S4_RNA-bd_sf"/>
</dbReference>
<dbReference type="InterPro" id="IPR054608">
    <property type="entry name" value="SYY-like_C"/>
</dbReference>
<dbReference type="InterPro" id="IPR002307">
    <property type="entry name" value="Tyr-tRNA-ligase"/>
</dbReference>
<dbReference type="InterPro" id="IPR024088">
    <property type="entry name" value="Tyr-tRNA-ligase_bac-type"/>
</dbReference>
<dbReference type="InterPro" id="IPR024108">
    <property type="entry name" value="Tyr-tRNA-ligase_bac_2"/>
</dbReference>
<dbReference type="NCBIfam" id="TIGR00234">
    <property type="entry name" value="tyrS"/>
    <property type="match status" value="1"/>
</dbReference>
<dbReference type="PANTHER" id="PTHR11766:SF1">
    <property type="entry name" value="TYROSINE--TRNA LIGASE"/>
    <property type="match status" value="1"/>
</dbReference>
<dbReference type="PANTHER" id="PTHR11766">
    <property type="entry name" value="TYROSYL-TRNA SYNTHETASE"/>
    <property type="match status" value="1"/>
</dbReference>
<dbReference type="Pfam" id="PF22421">
    <property type="entry name" value="SYY_C-terminal"/>
    <property type="match status" value="1"/>
</dbReference>
<dbReference type="Pfam" id="PF00579">
    <property type="entry name" value="tRNA-synt_1b"/>
    <property type="match status" value="1"/>
</dbReference>
<dbReference type="PRINTS" id="PR01040">
    <property type="entry name" value="TRNASYNTHTYR"/>
</dbReference>
<dbReference type="SUPFAM" id="SSF55174">
    <property type="entry name" value="Alpha-L RNA-binding motif"/>
    <property type="match status" value="1"/>
</dbReference>
<dbReference type="SUPFAM" id="SSF52374">
    <property type="entry name" value="Nucleotidylyl transferase"/>
    <property type="match status" value="1"/>
</dbReference>
<dbReference type="PROSITE" id="PS50889">
    <property type="entry name" value="S4"/>
    <property type="match status" value="1"/>
</dbReference>
<organism>
    <name type="scientific">Chlorobium luteolum (strain DSM 273 / BCRC 81028 / 2530)</name>
    <name type="common">Pelodictyon luteolum</name>
    <dbReference type="NCBI Taxonomy" id="319225"/>
    <lineage>
        <taxon>Bacteria</taxon>
        <taxon>Pseudomonadati</taxon>
        <taxon>Chlorobiota</taxon>
        <taxon>Chlorobiia</taxon>
        <taxon>Chlorobiales</taxon>
        <taxon>Chlorobiaceae</taxon>
        <taxon>Chlorobium/Pelodictyon group</taxon>
        <taxon>Pelodictyon</taxon>
    </lineage>
</organism>
<reference key="1">
    <citation type="submission" date="2005-08" db="EMBL/GenBank/DDBJ databases">
        <title>Complete sequence of Pelodictyon luteolum DSM 273.</title>
        <authorList>
            <consortium name="US DOE Joint Genome Institute"/>
            <person name="Copeland A."/>
            <person name="Lucas S."/>
            <person name="Lapidus A."/>
            <person name="Barry K."/>
            <person name="Detter J.C."/>
            <person name="Glavina T."/>
            <person name="Hammon N."/>
            <person name="Israni S."/>
            <person name="Pitluck S."/>
            <person name="Bryant D."/>
            <person name="Schmutz J."/>
            <person name="Larimer F."/>
            <person name="Land M."/>
            <person name="Kyrpides N."/>
            <person name="Ivanova N."/>
            <person name="Richardson P."/>
        </authorList>
    </citation>
    <scope>NUCLEOTIDE SEQUENCE [LARGE SCALE GENOMIC DNA]</scope>
    <source>
        <strain>DSM 273 / BCRC 81028 / 2530</strain>
    </source>
</reference>
<protein>
    <recommendedName>
        <fullName evidence="1">Tyrosine--tRNA ligase</fullName>
        <ecNumber evidence="1">6.1.1.1</ecNumber>
    </recommendedName>
    <alternativeName>
        <fullName evidence="1">Tyrosyl-tRNA synthetase</fullName>
        <shortName evidence="1">TyrRS</shortName>
    </alternativeName>
</protein>
<feature type="chain" id="PRO_0000236741" description="Tyrosine--tRNA ligase">
    <location>
        <begin position="1"/>
        <end position="405"/>
    </location>
</feature>
<feature type="domain" description="S4 RNA-binding" evidence="1">
    <location>
        <begin position="339"/>
        <end position="400"/>
    </location>
</feature>
<feature type="short sequence motif" description="'HIGH' region">
    <location>
        <begin position="48"/>
        <end position="57"/>
    </location>
</feature>
<feature type="short sequence motif" description="'KMSKS' region">
    <location>
        <begin position="232"/>
        <end position="236"/>
    </location>
</feature>
<feature type="binding site" evidence="1">
    <location>
        <position position="235"/>
    </location>
    <ligand>
        <name>ATP</name>
        <dbReference type="ChEBI" id="CHEBI:30616"/>
    </ligand>
</feature>
<sequence length="405" mass="45311">MSFPSLQEQLDIITANTVEIISSAELEQKIQHSIKTGAPLKVKLGADPSRPDLHLGHSVVLRKLREFQDLGHEAILIIGDFTAMIGDPSGKSKTRPQLSAEEARENGASYFEQASKILDPHKTTICYNADWLGNMTFADVIRLSSHYTVARMLERDDFERRYRSSEPISIHEFLYPLAQAMDSVHLRNDVELGGTDQKFNLLVGRDLQREYGILPQVCITMPLLVGTGGEDKMSKSLGNAVCFNDLPSDMYGRVLSIPDTLIENWCRLLLPLTGEGRRAILEGWEEDPRTAKRRLAREIVMQYYSAGEAGAAEEHFDRLFVHKQAPTEIELTRFSEPELPLVDLLTTLGAAASKTDARRMIQQNAVSIDEEKITDVKTIITLSDEPKTLKAGKRKFFRIATAGNS</sequence>
<name>SYY_CHLL3</name>
<evidence type="ECO:0000255" key="1">
    <source>
        <dbReference type="HAMAP-Rule" id="MF_02007"/>
    </source>
</evidence>
<proteinExistence type="inferred from homology"/>
<keyword id="KW-0030">Aminoacyl-tRNA synthetase</keyword>
<keyword id="KW-0067">ATP-binding</keyword>
<keyword id="KW-0963">Cytoplasm</keyword>
<keyword id="KW-0436">Ligase</keyword>
<keyword id="KW-0547">Nucleotide-binding</keyword>
<keyword id="KW-0648">Protein biosynthesis</keyword>
<keyword id="KW-1185">Reference proteome</keyword>
<keyword id="KW-0694">RNA-binding</keyword>